<feature type="chain" id="PRO_0000083763" description="3-isopropylmalate dehydrogenase">
    <location>
        <begin position="1"/>
        <end position="345"/>
    </location>
</feature>
<feature type="binding site" evidence="1">
    <location>
        <begin position="76"/>
        <end position="87"/>
    </location>
    <ligand>
        <name>NAD(+)</name>
        <dbReference type="ChEBI" id="CHEBI:57540"/>
    </ligand>
</feature>
<feature type="binding site" evidence="1">
    <location>
        <position position="94"/>
    </location>
    <ligand>
        <name>substrate</name>
    </ligand>
</feature>
<feature type="binding site" evidence="1">
    <location>
        <position position="104"/>
    </location>
    <ligand>
        <name>substrate</name>
    </ligand>
</feature>
<feature type="binding site" evidence="1">
    <location>
        <position position="132"/>
    </location>
    <ligand>
        <name>substrate</name>
    </ligand>
</feature>
<feature type="binding site" evidence="1">
    <location>
        <position position="216"/>
    </location>
    <ligand>
        <name>Mg(2+)</name>
        <dbReference type="ChEBI" id="CHEBI:18420"/>
    </ligand>
</feature>
<feature type="binding site" evidence="1">
    <location>
        <position position="216"/>
    </location>
    <ligand>
        <name>substrate</name>
    </ligand>
</feature>
<feature type="binding site" evidence="1">
    <location>
        <position position="240"/>
    </location>
    <ligand>
        <name>Mg(2+)</name>
        <dbReference type="ChEBI" id="CHEBI:18420"/>
    </ligand>
</feature>
<feature type="binding site" evidence="1">
    <location>
        <position position="244"/>
    </location>
    <ligand>
        <name>Mg(2+)</name>
        <dbReference type="ChEBI" id="CHEBI:18420"/>
    </ligand>
</feature>
<feature type="binding site" evidence="1">
    <location>
        <begin position="274"/>
        <end position="286"/>
    </location>
    <ligand>
        <name>NAD(+)</name>
        <dbReference type="ChEBI" id="CHEBI:57540"/>
    </ligand>
</feature>
<feature type="site" description="Important for catalysis" evidence="1">
    <location>
        <position position="139"/>
    </location>
</feature>
<feature type="site" description="Important for catalysis" evidence="1">
    <location>
        <position position="184"/>
    </location>
</feature>
<protein>
    <recommendedName>
        <fullName evidence="1">3-isopropylmalate dehydrogenase</fullName>
        <ecNumber evidence="1">1.1.1.85</ecNumber>
    </recommendedName>
    <alternativeName>
        <fullName evidence="1">3-IPM-DH</fullName>
    </alternativeName>
    <alternativeName>
        <fullName evidence="1">Beta-IPM dehydrogenase</fullName>
        <shortName evidence="1">IMDH</shortName>
    </alternativeName>
</protein>
<proteinExistence type="inferred from homology"/>
<name>LEU3_STRT2</name>
<dbReference type="EC" id="1.1.1.85" evidence="1"/>
<dbReference type="EMBL" id="CP000023">
    <property type="protein sequence ID" value="AAV60838.1"/>
    <property type="status" value="ALT_INIT"/>
    <property type="molecule type" value="Genomic_DNA"/>
</dbReference>
<dbReference type="RefSeq" id="WP_011681247.1">
    <property type="nucleotide sequence ID" value="NC_006448.1"/>
</dbReference>
<dbReference type="SMR" id="Q5M405"/>
<dbReference type="STRING" id="264199.stu1202"/>
<dbReference type="GeneID" id="66898996"/>
<dbReference type="KEGG" id="stl:stu1202"/>
<dbReference type="eggNOG" id="COG0473">
    <property type="taxonomic scope" value="Bacteria"/>
</dbReference>
<dbReference type="HOGENOM" id="CLU_031953_0_3_9"/>
<dbReference type="UniPathway" id="UPA00048">
    <property type="reaction ID" value="UER00072"/>
</dbReference>
<dbReference type="Proteomes" id="UP000001170">
    <property type="component" value="Chromosome"/>
</dbReference>
<dbReference type="GO" id="GO:0005829">
    <property type="term" value="C:cytosol"/>
    <property type="evidence" value="ECO:0007669"/>
    <property type="project" value="TreeGrafter"/>
</dbReference>
<dbReference type="GO" id="GO:0003862">
    <property type="term" value="F:3-isopropylmalate dehydrogenase activity"/>
    <property type="evidence" value="ECO:0007669"/>
    <property type="project" value="UniProtKB-UniRule"/>
</dbReference>
<dbReference type="GO" id="GO:0000287">
    <property type="term" value="F:magnesium ion binding"/>
    <property type="evidence" value="ECO:0007669"/>
    <property type="project" value="InterPro"/>
</dbReference>
<dbReference type="GO" id="GO:0051287">
    <property type="term" value="F:NAD binding"/>
    <property type="evidence" value="ECO:0007669"/>
    <property type="project" value="InterPro"/>
</dbReference>
<dbReference type="GO" id="GO:0009098">
    <property type="term" value="P:L-leucine biosynthetic process"/>
    <property type="evidence" value="ECO:0007669"/>
    <property type="project" value="UniProtKB-UniRule"/>
</dbReference>
<dbReference type="FunFam" id="3.40.718.10:FF:000006">
    <property type="entry name" value="3-isopropylmalate dehydrogenase"/>
    <property type="match status" value="1"/>
</dbReference>
<dbReference type="Gene3D" id="3.40.718.10">
    <property type="entry name" value="Isopropylmalate Dehydrogenase"/>
    <property type="match status" value="1"/>
</dbReference>
<dbReference type="HAMAP" id="MF_01033">
    <property type="entry name" value="LeuB_type1"/>
    <property type="match status" value="1"/>
</dbReference>
<dbReference type="InterPro" id="IPR019818">
    <property type="entry name" value="IsoCit/isopropylmalate_DH_CS"/>
</dbReference>
<dbReference type="InterPro" id="IPR024084">
    <property type="entry name" value="IsoPropMal-DH-like_dom"/>
</dbReference>
<dbReference type="InterPro" id="IPR004429">
    <property type="entry name" value="Isopropylmalate_DH"/>
</dbReference>
<dbReference type="NCBIfam" id="TIGR00169">
    <property type="entry name" value="leuB"/>
    <property type="match status" value="1"/>
</dbReference>
<dbReference type="PANTHER" id="PTHR42979">
    <property type="entry name" value="3-ISOPROPYLMALATE DEHYDROGENASE"/>
    <property type="match status" value="1"/>
</dbReference>
<dbReference type="PANTHER" id="PTHR42979:SF1">
    <property type="entry name" value="3-ISOPROPYLMALATE DEHYDROGENASE"/>
    <property type="match status" value="1"/>
</dbReference>
<dbReference type="Pfam" id="PF00180">
    <property type="entry name" value="Iso_dh"/>
    <property type="match status" value="1"/>
</dbReference>
<dbReference type="SMART" id="SM01329">
    <property type="entry name" value="Iso_dh"/>
    <property type="match status" value="1"/>
</dbReference>
<dbReference type="SUPFAM" id="SSF53659">
    <property type="entry name" value="Isocitrate/Isopropylmalate dehydrogenase-like"/>
    <property type="match status" value="1"/>
</dbReference>
<dbReference type="PROSITE" id="PS00470">
    <property type="entry name" value="IDH_IMDH"/>
    <property type="match status" value="1"/>
</dbReference>
<accession>Q5M405</accession>
<reference key="1">
    <citation type="journal article" date="2004" name="Nat. Biotechnol.">
        <title>Complete sequence and comparative genome analysis of the dairy bacterium Streptococcus thermophilus.</title>
        <authorList>
            <person name="Bolotin A."/>
            <person name="Quinquis B."/>
            <person name="Renault P."/>
            <person name="Sorokin A."/>
            <person name="Ehrlich S.D."/>
            <person name="Kulakauskas S."/>
            <person name="Lapidus A."/>
            <person name="Goltsman E."/>
            <person name="Mazur M."/>
            <person name="Pusch G.D."/>
            <person name="Fonstein M."/>
            <person name="Overbeek R."/>
            <person name="Kyprides N."/>
            <person name="Purnelle B."/>
            <person name="Prozzi D."/>
            <person name="Ngui K."/>
            <person name="Masuy D."/>
            <person name="Hancy F."/>
            <person name="Burteau S."/>
            <person name="Boutry M."/>
            <person name="Delcour J."/>
            <person name="Goffeau A."/>
            <person name="Hols P."/>
        </authorList>
    </citation>
    <scope>NUCLEOTIDE SEQUENCE [LARGE SCALE GENOMIC DNA]</scope>
    <source>
        <strain>ATCC BAA-250 / LMG 18311</strain>
    </source>
</reference>
<organism>
    <name type="scientific">Streptococcus thermophilus (strain ATCC BAA-250 / LMG 18311)</name>
    <dbReference type="NCBI Taxonomy" id="264199"/>
    <lineage>
        <taxon>Bacteria</taxon>
        <taxon>Bacillati</taxon>
        <taxon>Bacillota</taxon>
        <taxon>Bacilli</taxon>
        <taxon>Lactobacillales</taxon>
        <taxon>Streptococcaceae</taxon>
        <taxon>Streptococcus</taxon>
    </lineage>
</organism>
<evidence type="ECO:0000255" key="1">
    <source>
        <dbReference type="HAMAP-Rule" id="MF_01033"/>
    </source>
</evidence>
<evidence type="ECO:0000305" key="2"/>
<comment type="function">
    <text evidence="1">Catalyzes the oxidation of 3-carboxy-2-hydroxy-4-methylpentanoate (3-isopropylmalate) to 3-carboxy-4-methyl-2-oxopentanoate. The product decarboxylates to 4-methyl-2 oxopentanoate.</text>
</comment>
<comment type="catalytic activity">
    <reaction evidence="1">
        <text>(2R,3S)-3-isopropylmalate + NAD(+) = 4-methyl-2-oxopentanoate + CO2 + NADH</text>
        <dbReference type="Rhea" id="RHEA:32271"/>
        <dbReference type="ChEBI" id="CHEBI:16526"/>
        <dbReference type="ChEBI" id="CHEBI:17865"/>
        <dbReference type="ChEBI" id="CHEBI:35121"/>
        <dbReference type="ChEBI" id="CHEBI:57540"/>
        <dbReference type="ChEBI" id="CHEBI:57945"/>
        <dbReference type="EC" id="1.1.1.85"/>
    </reaction>
</comment>
<comment type="cofactor">
    <cofactor evidence="1">
        <name>Mg(2+)</name>
        <dbReference type="ChEBI" id="CHEBI:18420"/>
    </cofactor>
    <cofactor evidence="1">
        <name>Mn(2+)</name>
        <dbReference type="ChEBI" id="CHEBI:29035"/>
    </cofactor>
    <text evidence="1">Binds 1 Mg(2+) or Mn(2+) ion per subunit.</text>
</comment>
<comment type="pathway">
    <text evidence="1">Amino-acid biosynthesis; L-leucine biosynthesis; L-leucine from 3-methyl-2-oxobutanoate: step 3/4.</text>
</comment>
<comment type="subunit">
    <text evidence="1">Homodimer.</text>
</comment>
<comment type="subcellular location">
    <subcellularLocation>
        <location evidence="1">Cytoplasm</location>
    </subcellularLocation>
</comment>
<comment type="similarity">
    <text evidence="1">Belongs to the isocitrate and isopropylmalate dehydrogenases family. LeuB type 1 subfamily.</text>
</comment>
<comment type="sequence caution" evidence="2">
    <conflict type="erroneous initiation">
        <sequence resource="EMBL-CDS" id="AAV60838"/>
    </conflict>
</comment>
<sequence length="345" mass="37081">MTKKIVTLSGDGIGPEIMAAGLGVLDKVASKIEFDYDVDAKPFGGAGIDAEGHPLPKATLEAAKSADAILLAAIGGPKYDNAPVRPEQGLLAIRKELNLFANIRPVRIFDALKHLSPLKPERIEGVDFVVVRELTGGIYFGEHILEEDKARDINDYSADEIRRIMRRAFKIAQGRGKKVTSIDKQNVLATSKLWRKVADEVSLEFPDVTLEHQLVDSAAMIMITNPARFDVVVTENLFGDILSDESSVLPGTLGVMPSASHSENGPSLYEPIHGSAPDIAGQGIANPISMILSVAMMLRESFNETEGAELIENAVDKTLNQGILTRDLGGQASTAEMTAAIISNL</sequence>
<gene>
    <name evidence="1" type="primary">leuB</name>
    <name type="ordered locus">stu1202</name>
</gene>
<keyword id="KW-0028">Amino-acid biosynthesis</keyword>
<keyword id="KW-0100">Branched-chain amino acid biosynthesis</keyword>
<keyword id="KW-0963">Cytoplasm</keyword>
<keyword id="KW-0432">Leucine biosynthesis</keyword>
<keyword id="KW-0460">Magnesium</keyword>
<keyword id="KW-0464">Manganese</keyword>
<keyword id="KW-0479">Metal-binding</keyword>
<keyword id="KW-0520">NAD</keyword>
<keyword id="KW-0560">Oxidoreductase</keyword>
<keyword id="KW-1185">Reference proteome</keyword>